<protein>
    <recommendedName>
        <fullName evidence="1">Phosphopantetheine adenylyltransferase</fullName>
        <ecNumber evidence="1">2.7.7.3</ecNumber>
    </recommendedName>
    <alternativeName>
        <fullName evidence="1">Dephospho-CoA pyrophosphorylase</fullName>
    </alternativeName>
    <alternativeName>
        <fullName evidence="1">Pantetheine-phosphate adenylyltransferase</fullName>
        <shortName evidence="1">PPAT</shortName>
    </alternativeName>
</protein>
<reference key="1">
    <citation type="journal article" date="2011" name="J. Bacteriol.">
        <title>Complete genome sequence and updated annotation of Desulfovibrio alaskensis G20.</title>
        <authorList>
            <person name="Hauser L.J."/>
            <person name="Land M.L."/>
            <person name="Brown S.D."/>
            <person name="Larimer F."/>
            <person name="Keller K.L."/>
            <person name="Rapp-Giles B.J."/>
            <person name="Price M.N."/>
            <person name="Lin M."/>
            <person name="Bruce D.C."/>
            <person name="Detter J.C."/>
            <person name="Tapia R."/>
            <person name="Han C.S."/>
            <person name="Goodwin L.A."/>
            <person name="Cheng J.F."/>
            <person name="Pitluck S."/>
            <person name="Copeland A."/>
            <person name="Lucas S."/>
            <person name="Nolan M."/>
            <person name="Lapidus A.L."/>
            <person name="Palumbo A.V."/>
            <person name="Wall J.D."/>
        </authorList>
    </citation>
    <scope>NUCLEOTIDE SEQUENCE [LARGE SCALE GENOMIC DNA]</scope>
    <source>
        <strain>ATCC BAA-1058 / DSM 17464 / G20</strain>
    </source>
</reference>
<gene>
    <name evidence="1" type="primary">coaD</name>
    <name type="ordered locus">Dde_1783</name>
</gene>
<sequence>MGSTDGKIAIYPGTFDPLTNGHASLIQRGCQIFDHIVVAVANDTPKTPLFTIDERVQMAQEALEGVGSITVEPFSGLLVDYAERRGAGVILRGLRAVSDFEYEFQLALMNRKMKRHIQTVFLMTDYKWLYISSTIIKAAASLGGDIKGLVPDNVYRRLREKYGYPYPLNG</sequence>
<proteinExistence type="inferred from homology"/>
<comment type="function">
    <text evidence="1">Reversibly transfers an adenylyl group from ATP to 4'-phosphopantetheine, yielding dephospho-CoA (dPCoA) and pyrophosphate.</text>
</comment>
<comment type="catalytic activity">
    <reaction evidence="1">
        <text>(R)-4'-phosphopantetheine + ATP + H(+) = 3'-dephospho-CoA + diphosphate</text>
        <dbReference type="Rhea" id="RHEA:19801"/>
        <dbReference type="ChEBI" id="CHEBI:15378"/>
        <dbReference type="ChEBI" id="CHEBI:30616"/>
        <dbReference type="ChEBI" id="CHEBI:33019"/>
        <dbReference type="ChEBI" id="CHEBI:57328"/>
        <dbReference type="ChEBI" id="CHEBI:61723"/>
        <dbReference type="EC" id="2.7.7.3"/>
    </reaction>
</comment>
<comment type="cofactor">
    <cofactor evidence="1">
        <name>Mg(2+)</name>
        <dbReference type="ChEBI" id="CHEBI:18420"/>
    </cofactor>
</comment>
<comment type="pathway">
    <text evidence="1">Cofactor biosynthesis; coenzyme A biosynthesis; CoA from (R)-pantothenate: step 4/5.</text>
</comment>
<comment type="subunit">
    <text evidence="1">Homohexamer.</text>
</comment>
<comment type="subcellular location">
    <subcellularLocation>
        <location evidence="1">Cytoplasm</location>
    </subcellularLocation>
</comment>
<comment type="similarity">
    <text evidence="1">Belongs to the bacterial CoaD family.</text>
</comment>
<evidence type="ECO:0000255" key="1">
    <source>
        <dbReference type="HAMAP-Rule" id="MF_00151"/>
    </source>
</evidence>
<organism>
    <name type="scientific">Oleidesulfovibrio alaskensis (strain ATCC BAA-1058 / DSM 17464 / G20)</name>
    <name type="common">Desulfovibrio alaskensis</name>
    <dbReference type="NCBI Taxonomy" id="207559"/>
    <lineage>
        <taxon>Bacteria</taxon>
        <taxon>Pseudomonadati</taxon>
        <taxon>Thermodesulfobacteriota</taxon>
        <taxon>Desulfovibrionia</taxon>
        <taxon>Desulfovibrionales</taxon>
        <taxon>Desulfovibrionaceae</taxon>
        <taxon>Oleidesulfovibrio</taxon>
    </lineage>
</organism>
<feature type="chain" id="PRO_1000011136" description="Phosphopantetheine adenylyltransferase">
    <location>
        <begin position="1"/>
        <end position="170"/>
    </location>
</feature>
<feature type="binding site" evidence="1">
    <location>
        <begin position="14"/>
        <end position="15"/>
    </location>
    <ligand>
        <name>ATP</name>
        <dbReference type="ChEBI" id="CHEBI:30616"/>
    </ligand>
</feature>
<feature type="binding site" evidence="1">
    <location>
        <position position="14"/>
    </location>
    <ligand>
        <name>substrate</name>
    </ligand>
</feature>
<feature type="binding site" evidence="1">
    <location>
        <position position="22"/>
    </location>
    <ligand>
        <name>ATP</name>
        <dbReference type="ChEBI" id="CHEBI:30616"/>
    </ligand>
</feature>
<feature type="binding site" evidence="1">
    <location>
        <position position="46"/>
    </location>
    <ligand>
        <name>substrate</name>
    </ligand>
</feature>
<feature type="binding site" evidence="1">
    <location>
        <position position="78"/>
    </location>
    <ligand>
        <name>substrate</name>
    </ligand>
</feature>
<feature type="binding site" evidence="1">
    <location>
        <position position="92"/>
    </location>
    <ligand>
        <name>substrate</name>
    </ligand>
</feature>
<feature type="binding site" evidence="1">
    <location>
        <begin position="93"/>
        <end position="95"/>
    </location>
    <ligand>
        <name>ATP</name>
        <dbReference type="ChEBI" id="CHEBI:30616"/>
    </ligand>
</feature>
<feature type="binding site" evidence="1">
    <location>
        <position position="103"/>
    </location>
    <ligand>
        <name>ATP</name>
        <dbReference type="ChEBI" id="CHEBI:30616"/>
    </ligand>
</feature>
<feature type="binding site" evidence="1">
    <location>
        <begin position="128"/>
        <end position="134"/>
    </location>
    <ligand>
        <name>ATP</name>
        <dbReference type="ChEBI" id="CHEBI:30616"/>
    </ligand>
</feature>
<feature type="site" description="Transition state stabilizer" evidence="1">
    <location>
        <position position="22"/>
    </location>
</feature>
<name>COAD_OLEA2</name>
<dbReference type="EC" id="2.7.7.3" evidence="1"/>
<dbReference type="EMBL" id="CP000112">
    <property type="protein sequence ID" value="ABB38580.1"/>
    <property type="molecule type" value="Genomic_DNA"/>
</dbReference>
<dbReference type="RefSeq" id="WP_011367710.1">
    <property type="nucleotide sequence ID" value="NC_007519.1"/>
</dbReference>
<dbReference type="SMR" id="Q310R6"/>
<dbReference type="STRING" id="207559.Dde_1783"/>
<dbReference type="KEGG" id="dde:Dde_1783"/>
<dbReference type="eggNOG" id="COG0669">
    <property type="taxonomic scope" value="Bacteria"/>
</dbReference>
<dbReference type="HOGENOM" id="CLU_100149_0_1_7"/>
<dbReference type="UniPathway" id="UPA00241">
    <property type="reaction ID" value="UER00355"/>
</dbReference>
<dbReference type="Proteomes" id="UP000002710">
    <property type="component" value="Chromosome"/>
</dbReference>
<dbReference type="GO" id="GO:0005737">
    <property type="term" value="C:cytoplasm"/>
    <property type="evidence" value="ECO:0007669"/>
    <property type="project" value="UniProtKB-SubCell"/>
</dbReference>
<dbReference type="GO" id="GO:0005524">
    <property type="term" value="F:ATP binding"/>
    <property type="evidence" value="ECO:0007669"/>
    <property type="project" value="UniProtKB-KW"/>
</dbReference>
<dbReference type="GO" id="GO:0004595">
    <property type="term" value="F:pantetheine-phosphate adenylyltransferase activity"/>
    <property type="evidence" value="ECO:0007669"/>
    <property type="project" value="UniProtKB-UniRule"/>
</dbReference>
<dbReference type="GO" id="GO:0015937">
    <property type="term" value="P:coenzyme A biosynthetic process"/>
    <property type="evidence" value="ECO:0007669"/>
    <property type="project" value="UniProtKB-UniRule"/>
</dbReference>
<dbReference type="CDD" id="cd02163">
    <property type="entry name" value="PPAT"/>
    <property type="match status" value="1"/>
</dbReference>
<dbReference type="Gene3D" id="3.40.50.620">
    <property type="entry name" value="HUPs"/>
    <property type="match status" value="1"/>
</dbReference>
<dbReference type="HAMAP" id="MF_00151">
    <property type="entry name" value="PPAT_bact"/>
    <property type="match status" value="1"/>
</dbReference>
<dbReference type="InterPro" id="IPR004821">
    <property type="entry name" value="Cyt_trans-like"/>
</dbReference>
<dbReference type="InterPro" id="IPR001980">
    <property type="entry name" value="PPAT"/>
</dbReference>
<dbReference type="InterPro" id="IPR014729">
    <property type="entry name" value="Rossmann-like_a/b/a_fold"/>
</dbReference>
<dbReference type="NCBIfam" id="TIGR01510">
    <property type="entry name" value="coaD_prev_kdtB"/>
    <property type="match status" value="1"/>
</dbReference>
<dbReference type="NCBIfam" id="TIGR00125">
    <property type="entry name" value="cyt_tran_rel"/>
    <property type="match status" value="1"/>
</dbReference>
<dbReference type="PANTHER" id="PTHR21342">
    <property type="entry name" value="PHOSPHOPANTETHEINE ADENYLYLTRANSFERASE"/>
    <property type="match status" value="1"/>
</dbReference>
<dbReference type="PANTHER" id="PTHR21342:SF1">
    <property type="entry name" value="PHOSPHOPANTETHEINE ADENYLYLTRANSFERASE"/>
    <property type="match status" value="1"/>
</dbReference>
<dbReference type="Pfam" id="PF01467">
    <property type="entry name" value="CTP_transf_like"/>
    <property type="match status" value="1"/>
</dbReference>
<dbReference type="PRINTS" id="PR01020">
    <property type="entry name" value="LPSBIOSNTHSS"/>
</dbReference>
<dbReference type="SUPFAM" id="SSF52374">
    <property type="entry name" value="Nucleotidylyl transferase"/>
    <property type="match status" value="1"/>
</dbReference>
<keyword id="KW-0067">ATP-binding</keyword>
<keyword id="KW-0173">Coenzyme A biosynthesis</keyword>
<keyword id="KW-0963">Cytoplasm</keyword>
<keyword id="KW-0460">Magnesium</keyword>
<keyword id="KW-0547">Nucleotide-binding</keyword>
<keyword id="KW-0548">Nucleotidyltransferase</keyword>
<keyword id="KW-1185">Reference proteome</keyword>
<keyword id="KW-0808">Transferase</keyword>
<accession>Q310R6</accession>